<accession>Q5AZT7</accession>
<accession>C8V214</accession>
<organism>
    <name type="scientific">Emericella nidulans (strain FGSC A4 / ATCC 38163 / CBS 112.46 / NRRL 194 / M139)</name>
    <name type="common">Aspergillus nidulans</name>
    <dbReference type="NCBI Taxonomy" id="227321"/>
    <lineage>
        <taxon>Eukaryota</taxon>
        <taxon>Fungi</taxon>
        <taxon>Dikarya</taxon>
        <taxon>Ascomycota</taxon>
        <taxon>Pezizomycotina</taxon>
        <taxon>Eurotiomycetes</taxon>
        <taxon>Eurotiomycetidae</taxon>
        <taxon>Eurotiales</taxon>
        <taxon>Aspergillaceae</taxon>
        <taxon>Aspergillus</taxon>
        <taxon>Aspergillus subgen. Nidulantes</taxon>
    </lineage>
</organism>
<protein>
    <recommendedName>
        <fullName evidence="1">Lon protease homolog, mitochondrial</fullName>
        <ecNumber evidence="1">3.4.21.53</ecNumber>
    </recommendedName>
</protein>
<dbReference type="EC" id="3.4.21.53" evidence="1"/>
<dbReference type="EMBL" id="AACD01000105">
    <property type="protein sequence ID" value="EAA57979.1"/>
    <property type="molecule type" value="Genomic_DNA"/>
</dbReference>
<dbReference type="EMBL" id="BN001301">
    <property type="protein sequence ID" value="CBF69998.1"/>
    <property type="molecule type" value="Genomic_DNA"/>
</dbReference>
<dbReference type="RefSeq" id="XP_663797.1">
    <property type="nucleotide sequence ID" value="XM_658705.1"/>
</dbReference>
<dbReference type="SMR" id="Q5AZT7"/>
<dbReference type="FunCoup" id="Q5AZT7">
    <property type="interactions" value="985"/>
</dbReference>
<dbReference type="STRING" id="227321.Q5AZT7"/>
<dbReference type="MEROPS" id="S16.010"/>
<dbReference type="EnsemblFungi" id="CBF69998">
    <property type="protein sequence ID" value="CBF69998"/>
    <property type="gene ID" value="ANIA_06193"/>
</dbReference>
<dbReference type="KEGG" id="ani:ANIA_06193"/>
<dbReference type="VEuPathDB" id="FungiDB:AN6193"/>
<dbReference type="eggNOG" id="KOG2004">
    <property type="taxonomic scope" value="Eukaryota"/>
</dbReference>
<dbReference type="HOGENOM" id="CLU_004109_1_0_1"/>
<dbReference type="InParanoid" id="Q5AZT7"/>
<dbReference type="OMA" id="VEWYQEV"/>
<dbReference type="OrthoDB" id="2411602at2759"/>
<dbReference type="Proteomes" id="UP000000560">
    <property type="component" value="Chromosome I"/>
</dbReference>
<dbReference type="GO" id="GO:0005759">
    <property type="term" value="C:mitochondrial matrix"/>
    <property type="evidence" value="ECO:0000318"/>
    <property type="project" value="GO_Central"/>
</dbReference>
<dbReference type="GO" id="GO:0005524">
    <property type="term" value="F:ATP binding"/>
    <property type="evidence" value="ECO:0007669"/>
    <property type="project" value="UniProtKB-UniRule"/>
</dbReference>
<dbReference type="GO" id="GO:0016887">
    <property type="term" value="F:ATP hydrolysis activity"/>
    <property type="evidence" value="ECO:0007669"/>
    <property type="project" value="UniProtKB-UniRule"/>
</dbReference>
<dbReference type="GO" id="GO:0004176">
    <property type="term" value="F:ATP-dependent peptidase activity"/>
    <property type="evidence" value="ECO:0000318"/>
    <property type="project" value="GO_Central"/>
</dbReference>
<dbReference type="GO" id="GO:0043565">
    <property type="term" value="F:sequence-specific DNA binding"/>
    <property type="evidence" value="ECO:0007669"/>
    <property type="project" value="UniProtKB-UniRule"/>
</dbReference>
<dbReference type="GO" id="GO:0004252">
    <property type="term" value="F:serine-type endopeptidase activity"/>
    <property type="evidence" value="ECO:0007669"/>
    <property type="project" value="UniProtKB-UniRule"/>
</dbReference>
<dbReference type="GO" id="GO:0003697">
    <property type="term" value="F:single-stranded DNA binding"/>
    <property type="evidence" value="ECO:0000318"/>
    <property type="project" value="GO_Central"/>
</dbReference>
<dbReference type="GO" id="GO:0034599">
    <property type="term" value="P:cellular response to oxidative stress"/>
    <property type="evidence" value="ECO:0007669"/>
    <property type="project" value="UniProtKB-UniRule"/>
</dbReference>
<dbReference type="GO" id="GO:0051131">
    <property type="term" value="P:chaperone-mediated protein complex assembly"/>
    <property type="evidence" value="ECO:0000318"/>
    <property type="project" value="GO_Central"/>
</dbReference>
<dbReference type="GO" id="GO:0035694">
    <property type="term" value="P:mitochondrial protein catabolic process"/>
    <property type="evidence" value="ECO:0007669"/>
    <property type="project" value="EnsemblFungi"/>
</dbReference>
<dbReference type="GO" id="GO:0007005">
    <property type="term" value="P:mitochondrion organization"/>
    <property type="evidence" value="ECO:0000318"/>
    <property type="project" value="GO_Central"/>
</dbReference>
<dbReference type="GO" id="GO:0070407">
    <property type="term" value="P:oxidation-dependent protein catabolic process"/>
    <property type="evidence" value="ECO:0007669"/>
    <property type="project" value="UniProtKB-UniRule"/>
</dbReference>
<dbReference type="GO" id="GO:0006515">
    <property type="term" value="P:protein quality control for misfolded or incompletely synthesized proteins"/>
    <property type="evidence" value="ECO:0000318"/>
    <property type="project" value="GO_Central"/>
</dbReference>
<dbReference type="CDD" id="cd19500">
    <property type="entry name" value="RecA-like_Lon"/>
    <property type="match status" value="1"/>
</dbReference>
<dbReference type="FunFam" id="3.40.50.300:FF:000021">
    <property type="entry name" value="Lon protease homolog"/>
    <property type="match status" value="1"/>
</dbReference>
<dbReference type="FunFam" id="1.10.8.60:FF:000113">
    <property type="entry name" value="Lon protease homolog, mitochondrial"/>
    <property type="match status" value="1"/>
</dbReference>
<dbReference type="FunFam" id="1.20.5.5270:FF:000001">
    <property type="entry name" value="Lon protease homolog, mitochondrial"/>
    <property type="match status" value="1"/>
</dbReference>
<dbReference type="FunFam" id="1.20.58.1480:FF:000003">
    <property type="entry name" value="Lon protease homolog, mitochondrial"/>
    <property type="match status" value="1"/>
</dbReference>
<dbReference type="FunFam" id="2.30.130.40:FF:000006">
    <property type="entry name" value="Lon protease homolog, mitochondrial"/>
    <property type="match status" value="1"/>
</dbReference>
<dbReference type="FunFam" id="3.30.230.10:FF:000015">
    <property type="entry name" value="Lon protease homolog, mitochondrial"/>
    <property type="match status" value="1"/>
</dbReference>
<dbReference type="Gene3D" id="1.10.8.60">
    <property type="match status" value="1"/>
</dbReference>
<dbReference type="Gene3D" id="1.20.5.5270">
    <property type="match status" value="1"/>
</dbReference>
<dbReference type="Gene3D" id="1.20.58.1480">
    <property type="match status" value="1"/>
</dbReference>
<dbReference type="Gene3D" id="3.30.230.10">
    <property type="match status" value="1"/>
</dbReference>
<dbReference type="Gene3D" id="2.30.130.40">
    <property type="entry name" value="LON domain-like"/>
    <property type="match status" value="1"/>
</dbReference>
<dbReference type="Gene3D" id="3.40.50.300">
    <property type="entry name" value="P-loop containing nucleotide triphosphate hydrolases"/>
    <property type="match status" value="1"/>
</dbReference>
<dbReference type="HAMAP" id="MF_03120">
    <property type="entry name" value="lonm_euk"/>
    <property type="match status" value="1"/>
</dbReference>
<dbReference type="InterPro" id="IPR003593">
    <property type="entry name" value="AAA+_ATPase"/>
</dbReference>
<dbReference type="InterPro" id="IPR003959">
    <property type="entry name" value="ATPase_AAA_core"/>
</dbReference>
<dbReference type="InterPro" id="IPR004815">
    <property type="entry name" value="Lon_bac/euk-typ"/>
</dbReference>
<dbReference type="InterPro" id="IPR054594">
    <property type="entry name" value="Lon_lid"/>
</dbReference>
<dbReference type="InterPro" id="IPR008269">
    <property type="entry name" value="Lon_proteolytic"/>
</dbReference>
<dbReference type="InterPro" id="IPR027065">
    <property type="entry name" value="Lon_Prtase"/>
</dbReference>
<dbReference type="InterPro" id="IPR003111">
    <property type="entry name" value="Lon_prtase_N"/>
</dbReference>
<dbReference type="InterPro" id="IPR046336">
    <property type="entry name" value="Lon_prtase_N_sf"/>
</dbReference>
<dbReference type="InterPro" id="IPR027503">
    <property type="entry name" value="Lonm_euk"/>
</dbReference>
<dbReference type="InterPro" id="IPR027417">
    <property type="entry name" value="P-loop_NTPase"/>
</dbReference>
<dbReference type="InterPro" id="IPR008268">
    <property type="entry name" value="Peptidase_S16_AS"/>
</dbReference>
<dbReference type="InterPro" id="IPR015947">
    <property type="entry name" value="PUA-like_sf"/>
</dbReference>
<dbReference type="InterPro" id="IPR020568">
    <property type="entry name" value="Ribosomal_Su5_D2-typ_SF"/>
</dbReference>
<dbReference type="InterPro" id="IPR014721">
    <property type="entry name" value="Ribsml_uS5_D2-typ_fold_subgr"/>
</dbReference>
<dbReference type="NCBIfam" id="TIGR00763">
    <property type="entry name" value="lon"/>
    <property type="match status" value="1"/>
</dbReference>
<dbReference type="PANTHER" id="PTHR43718">
    <property type="entry name" value="LON PROTEASE"/>
    <property type="match status" value="1"/>
</dbReference>
<dbReference type="PANTHER" id="PTHR43718:SF2">
    <property type="entry name" value="LON PROTEASE HOMOLOG, MITOCHONDRIAL"/>
    <property type="match status" value="1"/>
</dbReference>
<dbReference type="Pfam" id="PF00004">
    <property type="entry name" value="AAA"/>
    <property type="match status" value="1"/>
</dbReference>
<dbReference type="Pfam" id="PF05362">
    <property type="entry name" value="Lon_C"/>
    <property type="match status" value="1"/>
</dbReference>
<dbReference type="Pfam" id="PF22667">
    <property type="entry name" value="Lon_lid"/>
    <property type="match status" value="1"/>
</dbReference>
<dbReference type="Pfam" id="PF02190">
    <property type="entry name" value="LON_substr_bdg"/>
    <property type="match status" value="1"/>
</dbReference>
<dbReference type="PRINTS" id="PR00830">
    <property type="entry name" value="ENDOLAPTASE"/>
</dbReference>
<dbReference type="SMART" id="SM00382">
    <property type="entry name" value="AAA"/>
    <property type="match status" value="1"/>
</dbReference>
<dbReference type="SMART" id="SM00464">
    <property type="entry name" value="LON"/>
    <property type="match status" value="1"/>
</dbReference>
<dbReference type="SUPFAM" id="SSF52540">
    <property type="entry name" value="P-loop containing nucleoside triphosphate hydrolases"/>
    <property type="match status" value="1"/>
</dbReference>
<dbReference type="SUPFAM" id="SSF88697">
    <property type="entry name" value="PUA domain-like"/>
    <property type="match status" value="1"/>
</dbReference>
<dbReference type="SUPFAM" id="SSF54211">
    <property type="entry name" value="Ribosomal protein S5 domain 2-like"/>
    <property type="match status" value="1"/>
</dbReference>
<dbReference type="PROSITE" id="PS51787">
    <property type="entry name" value="LON_N"/>
    <property type="match status" value="1"/>
</dbReference>
<dbReference type="PROSITE" id="PS51786">
    <property type="entry name" value="LON_PROTEOLYTIC"/>
    <property type="match status" value="1"/>
</dbReference>
<dbReference type="PROSITE" id="PS01046">
    <property type="entry name" value="LON_SER"/>
    <property type="match status" value="1"/>
</dbReference>
<reference key="1">
    <citation type="journal article" date="2005" name="Nature">
        <title>Sequencing of Aspergillus nidulans and comparative analysis with A. fumigatus and A. oryzae.</title>
        <authorList>
            <person name="Galagan J.E."/>
            <person name="Calvo S.E."/>
            <person name="Cuomo C."/>
            <person name="Ma L.-J."/>
            <person name="Wortman J.R."/>
            <person name="Batzoglou S."/>
            <person name="Lee S.-I."/>
            <person name="Bastuerkmen M."/>
            <person name="Spevak C.C."/>
            <person name="Clutterbuck J."/>
            <person name="Kapitonov V."/>
            <person name="Jurka J."/>
            <person name="Scazzocchio C."/>
            <person name="Farman M.L."/>
            <person name="Butler J."/>
            <person name="Purcell S."/>
            <person name="Harris S."/>
            <person name="Braus G.H."/>
            <person name="Draht O."/>
            <person name="Busch S."/>
            <person name="D'Enfert C."/>
            <person name="Bouchier C."/>
            <person name="Goldman G.H."/>
            <person name="Bell-Pedersen D."/>
            <person name="Griffiths-Jones S."/>
            <person name="Doonan J.H."/>
            <person name="Yu J."/>
            <person name="Vienken K."/>
            <person name="Pain A."/>
            <person name="Freitag M."/>
            <person name="Selker E.U."/>
            <person name="Archer D.B."/>
            <person name="Penalva M.A."/>
            <person name="Oakley B.R."/>
            <person name="Momany M."/>
            <person name="Tanaka T."/>
            <person name="Kumagai T."/>
            <person name="Asai K."/>
            <person name="Machida M."/>
            <person name="Nierman W.C."/>
            <person name="Denning D.W."/>
            <person name="Caddick M.X."/>
            <person name="Hynes M."/>
            <person name="Paoletti M."/>
            <person name="Fischer R."/>
            <person name="Miller B.L."/>
            <person name="Dyer P.S."/>
            <person name="Sachs M.S."/>
            <person name="Osmani S.A."/>
            <person name="Birren B.W."/>
        </authorList>
    </citation>
    <scope>NUCLEOTIDE SEQUENCE [LARGE SCALE GENOMIC DNA]</scope>
    <source>
        <strain>FGSC A4 / ATCC 38163 / CBS 112.46 / NRRL 194 / M139</strain>
    </source>
</reference>
<reference key="2">
    <citation type="journal article" date="2009" name="Fungal Genet. Biol.">
        <title>The 2008 update of the Aspergillus nidulans genome annotation: a community effort.</title>
        <authorList>
            <person name="Wortman J.R."/>
            <person name="Gilsenan J.M."/>
            <person name="Joardar V."/>
            <person name="Deegan J."/>
            <person name="Clutterbuck J."/>
            <person name="Andersen M.R."/>
            <person name="Archer D."/>
            <person name="Bencina M."/>
            <person name="Braus G."/>
            <person name="Coutinho P."/>
            <person name="von Dohren H."/>
            <person name="Doonan J."/>
            <person name="Driessen A.J."/>
            <person name="Durek P."/>
            <person name="Espeso E."/>
            <person name="Fekete E."/>
            <person name="Flipphi M."/>
            <person name="Estrada C.G."/>
            <person name="Geysens S."/>
            <person name="Goldman G."/>
            <person name="de Groot P.W."/>
            <person name="Hansen K."/>
            <person name="Harris S.D."/>
            <person name="Heinekamp T."/>
            <person name="Helmstaedt K."/>
            <person name="Henrissat B."/>
            <person name="Hofmann G."/>
            <person name="Homan T."/>
            <person name="Horio T."/>
            <person name="Horiuchi H."/>
            <person name="James S."/>
            <person name="Jones M."/>
            <person name="Karaffa L."/>
            <person name="Karanyi Z."/>
            <person name="Kato M."/>
            <person name="Keller N."/>
            <person name="Kelly D.E."/>
            <person name="Kiel J.A."/>
            <person name="Kim J.M."/>
            <person name="van der Klei I.J."/>
            <person name="Klis F.M."/>
            <person name="Kovalchuk A."/>
            <person name="Krasevec N."/>
            <person name="Kubicek C.P."/>
            <person name="Liu B."/>
            <person name="Maccabe A."/>
            <person name="Meyer V."/>
            <person name="Mirabito P."/>
            <person name="Miskei M."/>
            <person name="Mos M."/>
            <person name="Mullins J."/>
            <person name="Nelson D.R."/>
            <person name="Nielsen J."/>
            <person name="Oakley B.R."/>
            <person name="Osmani S.A."/>
            <person name="Pakula T."/>
            <person name="Paszewski A."/>
            <person name="Paulsen I."/>
            <person name="Pilsyk S."/>
            <person name="Pocsi I."/>
            <person name="Punt P.J."/>
            <person name="Ram A.F."/>
            <person name="Ren Q."/>
            <person name="Robellet X."/>
            <person name="Robson G."/>
            <person name="Seiboth B."/>
            <person name="van Solingen P."/>
            <person name="Specht T."/>
            <person name="Sun J."/>
            <person name="Taheri-Talesh N."/>
            <person name="Takeshita N."/>
            <person name="Ussery D."/>
            <person name="vanKuyk P.A."/>
            <person name="Visser H."/>
            <person name="van de Vondervoort P.J."/>
            <person name="de Vries R.P."/>
            <person name="Walton J."/>
            <person name="Xiang X."/>
            <person name="Xiong Y."/>
            <person name="Zeng A.P."/>
            <person name="Brandt B.W."/>
            <person name="Cornell M.J."/>
            <person name="van den Hondel C.A."/>
            <person name="Visser J."/>
            <person name="Oliver S.G."/>
            <person name="Turner G."/>
        </authorList>
    </citation>
    <scope>GENOME REANNOTATION</scope>
    <source>
        <strain>FGSC A4 / ATCC 38163 / CBS 112.46 / NRRL 194 / M139</strain>
    </source>
</reference>
<sequence length="1104" mass="121838">MLRGQTLRWRAALQTPRSLILRPLFAPGGYNVGPRSVLETSRRFRSLPPSLRTFSSSTARRKEKPPPGDEKEDSNKKENKDNDDGTEDKEVERDPRRKQADSSGKHGSSVDPGAPTSGFARRREKAADRDQRSVTEDAKREAEAKGNSSDTPSAIPVSDSSSESKPSGSHNGGDDGGKKGKKNDKALQKPSVPDVYPQVMAIPIAKRPLFPGFYKAITIRDPNVATAIQEMMKRGQPYVGAFLFKDENADGDVIESTDDVYDTGVFAQVTAAYPLRGEQSGVTAVLYPHRRIKISSLIPPGDSTKSGNSEDKTTEKRGDVVASFEENAAELVTKDHYEPTSFLRKYPVSLVNVENLTEEPFDKKSAIIRAVTSEIVNVCKEIATLNPLFRDQISAFYTDQFPGNLSDEPAKLADFAAAVSGGELHELQEVLESMNIEERLPKGLVVLKKELMNAQLQTKISKDVEAKIQKRQREYWLMEQMKGIKRELGIESDGKDKLVEKFKEKAEKLAMPEAVKKVFDEELNKLAHLEPAASEFNVTRNYLDWLTQIPWGQKSVENFGISHATDVLNEDHYGLKDVKDRILEFIAVGKLRGTVEGKILCLVGPPGVGKTSIGKSIARALNRQYYRFSVGGLTDVAEIKGHRRTYVGALPGRIIQALKKCQTENPLILIDEVDKIGRGHQGDPSSALLELLDPEQNSSFLDHYMDVPVDLSKVLFVCTANVTDTIPRPLLDRMELIELSGYVADEKMAIAQKYLAPAARELTGLKNVDVTLTEEAIEELIKSYCRESGVRNLKKQIEKVYRKAAFKIVSDLGEDVLAEDKALTAEGKAAQEESEKETGPIESTSEQEKATTENPRVALNVPDSVHLSIGKDSLTDYVGPPIFTTDRLYDTFPPGVTMGLAWTSMGGAALYVESILENALTPESQPGLDITGNLQNVMKESTQIAYSFVKSVMAKQFPENRFFEKAKLHMHCPEGAVPKDGPSAGITMATSLLSLALNHPLDPTIAMTGELTVTGKVLRIGGLREKTVAARRAGAKTIIFPADNMSDWLELPENIKSGIEGHAVSWYSEVFDILFADLDKQAANRVWQKQLSKEPKKSNDKDDH</sequence>
<gene>
    <name type="primary">pim1</name>
    <name type="ORF">AN6193</name>
</gene>
<comment type="function">
    <text evidence="1">ATP-dependent serine protease that mediates the selective degradation of misfolded, unassembled or oxidatively damaged polypeptides as well as certain short-lived regulatory proteins in the mitochondrial matrix. May also have a chaperone function in the assembly of inner membrane protein complexes. Participates in the regulation of mitochondrial gene expression and in the maintenance of the integrity of the mitochondrial genome. Binds to mitochondrial DNA in a site-specific manner.</text>
</comment>
<comment type="catalytic activity">
    <reaction evidence="1">
        <text>Hydrolysis of proteins in presence of ATP.</text>
        <dbReference type="EC" id="3.4.21.53"/>
    </reaction>
</comment>
<comment type="subunit">
    <text evidence="1">Homohexamer or homoheptamer. Organized in a ring with a central cavity.</text>
</comment>
<comment type="subcellular location">
    <subcellularLocation>
        <location evidence="1">Mitochondrion matrix</location>
    </subcellularLocation>
</comment>
<comment type="similarity">
    <text evidence="1">Belongs to the peptidase S16 family.</text>
</comment>
<proteinExistence type="inferred from homology"/>
<name>LONM_EMENI</name>
<feature type="transit peptide" description="Mitochondrion" evidence="1">
    <location>
        <begin position="1"/>
        <end position="54"/>
    </location>
</feature>
<feature type="chain" id="PRO_0000395779" description="Lon protease homolog, mitochondrial">
    <location>
        <begin position="55"/>
        <end position="1104"/>
    </location>
</feature>
<feature type="domain" description="Lon N-terminal" evidence="3">
    <location>
        <begin position="199"/>
        <end position="451"/>
    </location>
</feature>
<feature type="domain" description="Lon proteolytic" evidence="2">
    <location>
        <begin position="891"/>
        <end position="1077"/>
    </location>
</feature>
<feature type="region of interest" description="Disordered" evidence="4">
    <location>
        <begin position="41"/>
        <end position="192"/>
    </location>
</feature>
<feature type="region of interest" description="Disordered" evidence="4">
    <location>
        <begin position="296"/>
        <end position="317"/>
    </location>
</feature>
<feature type="region of interest" description="Disordered" evidence="4">
    <location>
        <begin position="825"/>
        <end position="857"/>
    </location>
</feature>
<feature type="compositionally biased region" description="Basic and acidic residues" evidence="4">
    <location>
        <begin position="64"/>
        <end position="104"/>
    </location>
</feature>
<feature type="compositionally biased region" description="Basic and acidic residues" evidence="4">
    <location>
        <begin position="125"/>
        <end position="144"/>
    </location>
</feature>
<feature type="compositionally biased region" description="Low complexity" evidence="4">
    <location>
        <begin position="158"/>
        <end position="169"/>
    </location>
</feature>
<feature type="compositionally biased region" description="Basic and acidic residues" evidence="4">
    <location>
        <begin position="172"/>
        <end position="187"/>
    </location>
</feature>
<feature type="compositionally biased region" description="Basic and acidic residues" evidence="4">
    <location>
        <begin position="308"/>
        <end position="317"/>
    </location>
</feature>
<feature type="compositionally biased region" description="Basic and acidic residues" evidence="4">
    <location>
        <begin position="825"/>
        <end position="839"/>
    </location>
</feature>
<feature type="active site" evidence="1">
    <location>
        <position position="983"/>
    </location>
</feature>
<feature type="active site" evidence="1">
    <location>
        <position position="1026"/>
    </location>
</feature>
<feature type="binding site" evidence="1">
    <location>
        <begin position="604"/>
        <end position="611"/>
    </location>
    <ligand>
        <name>ATP</name>
        <dbReference type="ChEBI" id="CHEBI:30616"/>
    </ligand>
</feature>
<keyword id="KW-0067">ATP-binding</keyword>
<keyword id="KW-0238">DNA-binding</keyword>
<keyword id="KW-0378">Hydrolase</keyword>
<keyword id="KW-0496">Mitochondrion</keyword>
<keyword id="KW-0547">Nucleotide-binding</keyword>
<keyword id="KW-0645">Protease</keyword>
<keyword id="KW-1185">Reference proteome</keyword>
<keyword id="KW-0720">Serine protease</keyword>
<keyword id="KW-0809">Transit peptide</keyword>
<evidence type="ECO:0000255" key="1">
    <source>
        <dbReference type="HAMAP-Rule" id="MF_03120"/>
    </source>
</evidence>
<evidence type="ECO:0000255" key="2">
    <source>
        <dbReference type="PROSITE-ProRule" id="PRU01122"/>
    </source>
</evidence>
<evidence type="ECO:0000255" key="3">
    <source>
        <dbReference type="PROSITE-ProRule" id="PRU01123"/>
    </source>
</evidence>
<evidence type="ECO:0000256" key="4">
    <source>
        <dbReference type="SAM" id="MobiDB-lite"/>
    </source>
</evidence>